<sequence length="156" mass="17383">MDINITLIGQMITFAIFIGFTMKFVWPPLRKALEERREKIAEGLASADRASRELEVAKRQSAEILREAKAKATEIVENAYVRAHKVDEQAKEEAIAAADKIKSMAIAEIEQEKVKAKEQLKQELVNLAMAAASKIIAASVDEKASKKVLEDFVEKV</sequence>
<keyword id="KW-0066">ATP synthesis</keyword>
<keyword id="KW-0997">Cell inner membrane</keyword>
<keyword id="KW-1003">Cell membrane</keyword>
<keyword id="KW-0138">CF(0)</keyword>
<keyword id="KW-0375">Hydrogen ion transport</keyword>
<keyword id="KW-0406">Ion transport</keyword>
<keyword id="KW-0472">Membrane</keyword>
<keyword id="KW-0812">Transmembrane</keyword>
<keyword id="KW-1133">Transmembrane helix</keyword>
<keyword id="KW-0813">Transport</keyword>
<proteinExistence type="inferred from homology"/>
<name>ATPF_FRATF</name>
<comment type="function">
    <text evidence="1">F(1)F(0) ATP synthase produces ATP from ADP in the presence of a proton or sodium gradient. F-type ATPases consist of two structural domains, F(1) containing the extramembraneous catalytic core and F(0) containing the membrane proton channel, linked together by a central stalk and a peripheral stalk. During catalysis, ATP synthesis in the catalytic domain of F(1) is coupled via a rotary mechanism of the central stalk subunits to proton translocation.</text>
</comment>
<comment type="function">
    <text evidence="1">Component of the F(0) channel, it forms part of the peripheral stalk, linking F(1) to F(0).</text>
</comment>
<comment type="subunit">
    <text evidence="1">F-type ATPases have 2 components, F(1) - the catalytic core - and F(0) - the membrane proton channel. F(1) has five subunits: alpha(3), beta(3), gamma(1), delta(1), epsilon(1). F(0) has three main subunits: a(1), b(2) and c(10-14). The alpha and beta chains form an alternating ring which encloses part of the gamma chain. F(1) is attached to F(0) by a central stalk formed by the gamma and epsilon chains, while a peripheral stalk is formed by the delta and b chains.</text>
</comment>
<comment type="subcellular location">
    <subcellularLocation>
        <location evidence="1">Cell inner membrane</location>
        <topology evidence="1">Single-pass membrane protein</topology>
    </subcellularLocation>
</comment>
<comment type="similarity">
    <text evidence="1">Belongs to the ATPase B chain family.</text>
</comment>
<reference key="1">
    <citation type="journal article" date="2009" name="PLoS ONE">
        <title>Complete genome sequence of Francisella tularensis subspecies holarctica FTNF002-00.</title>
        <authorList>
            <person name="Barabote R.D."/>
            <person name="Xie G."/>
            <person name="Brettin T.S."/>
            <person name="Hinrichs S.H."/>
            <person name="Fey P.D."/>
            <person name="Jay J.J."/>
            <person name="Engle J.L."/>
            <person name="Godbole S.D."/>
            <person name="Noronha J.M."/>
            <person name="Scheuermann R.H."/>
            <person name="Zhou L.W."/>
            <person name="Lion C."/>
            <person name="Dempsey M.P."/>
        </authorList>
    </citation>
    <scope>NUCLEOTIDE SEQUENCE [LARGE SCALE GENOMIC DNA]</scope>
    <source>
        <strain>FTNF002-00 / FTA</strain>
    </source>
</reference>
<evidence type="ECO:0000255" key="1">
    <source>
        <dbReference type="HAMAP-Rule" id="MF_01398"/>
    </source>
</evidence>
<organism>
    <name type="scientific">Francisella tularensis subsp. holarctica (strain FTNF002-00 / FTA)</name>
    <dbReference type="NCBI Taxonomy" id="458234"/>
    <lineage>
        <taxon>Bacteria</taxon>
        <taxon>Pseudomonadati</taxon>
        <taxon>Pseudomonadota</taxon>
        <taxon>Gammaproteobacteria</taxon>
        <taxon>Thiotrichales</taxon>
        <taxon>Francisellaceae</taxon>
        <taxon>Francisella</taxon>
    </lineage>
</organism>
<protein>
    <recommendedName>
        <fullName evidence="1">ATP synthase subunit b</fullName>
    </recommendedName>
    <alternativeName>
        <fullName evidence="1">ATP synthase F(0) sector subunit b</fullName>
    </alternativeName>
    <alternativeName>
        <fullName evidence="1">ATPase subunit I</fullName>
    </alternativeName>
    <alternativeName>
        <fullName evidence="1">F-type ATPase subunit b</fullName>
        <shortName evidence="1">F-ATPase subunit b</shortName>
    </alternativeName>
</protein>
<dbReference type="EMBL" id="CP000803">
    <property type="protein sequence ID" value="ABU62381.1"/>
    <property type="molecule type" value="Genomic_DNA"/>
</dbReference>
<dbReference type="RefSeq" id="WP_003017342.1">
    <property type="nucleotide sequence ID" value="NC_009749.1"/>
</dbReference>
<dbReference type="SMR" id="A7NEH8"/>
<dbReference type="KEGG" id="fta:FTA_1906"/>
<dbReference type="HOGENOM" id="CLU_079215_4_5_6"/>
<dbReference type="GO" id="GO:0005886">
    <property type="term" value="C:plasma membrane"/>
    <property type="evidence" value="ECO:0007669"/>
    <property type="project" value="UniProtKB-SubCell"/>
</dbReference>
<dbReference type="GO" id="GO:0045259">
    <property type="term" value="C:proton-transporting ATP synthase complex"/>
    <property type="evidence" value="ECO:0007669"/>
    <property type="project" value="UniProtKB-KW"/>
</dbReference>
<dbReference type="GO" id="GO:0046933">
    <property type="term" value="F:proton-transporting ATP synthase activity, rotational mechanism"/>
    <property type="evidence" value="ECO:0007669"/>
    <property type="project" value="UniProtKB-UniRule"/>
</dbReference>
<dbReference type="GO" id="GO:0046961">
    <property type="term" value="F:proton-transporting ATPase activity, rotational mechanism"/>
    <property type="evidence" value="ECO:0007669"/>
    <property type="project" value="TreeGrafter"/>
</dbReference>
<dbReference type="CDD" id="cd06503">
    <property type="entry name" value="ATP-synt_Fo_b"/>
    <property type="match status" value="1"/>
</dbReference>
<dbReference type="Gene3D" id="6.10.250.1580">
    <property type="match status" value="1"/>
</dbReference>
<dbReference type="HAMAP" id="MF_01398">
    <property type="entry name" value="ATP_synth_b_bprime"/>
    <property type="match status" value="1"/>
</dbReference>
<dbReference type="InterPro" id="IPR028987">
    <property type="entry name" value="ATP_synth_B-like_membr_sf"/>
</dbReference>
<dbReference type="InterPro" id="IPR002146">
    <property type="entry name" value="ATP_synth_b/b'su_bac/chlpt"/>
</dbReference>
<dbReference type="InterPro" id="IPR005864">
    <property type="entry name" value="ATP_synth_F0_bsu_bac"/>
</dbReference>
<dbReference type="InterPro" id="IPR050059">
    <property type="entry name" value="ATP_synthase_B_chain"/>
</dbReference>
<dbReference type="NCBIfam" id="TIGR01144">
    <property type="entry name" value="ATP_synt_b"/>
    <property type="match status" value="1"/>
</dbReference>
<dbReference type="NCBIfam" id="NF004411">
    <property type="entry name" value="PRK05759.1-2"/>
    <property type="match status" value="1"/>
</dbReference>
<dbReference type="PANTHER" id="PTHR33445:SF1">
    <property type="entry name" value="ATP SYNTHASE SUBUNIT B"/>
    <property type="match status" value="1"/>
</dbReference>
<dbReference type="PANTHER" id="PTHR33445">
    <property type="entry name" value="ATP SYNTHASE SUBUNIT B', CHLOROPLASTIC"/>
    <property type="match status" value="1"/>
</dbReference>
<dbReference type="Pfam" id="PF00430">
    <property type="entry name" value="ATP-synt_B"/>
    <property type="match status" value="1"/>
</dbReference>
<dbReference type="SUPFAM" id="SSF81573">
    <property type="entry name" value="F1F0 ATP synthase subunit B, membrane domain"/>
    <property type="match status" value="1"/>
</dbReference>
<accession>A7NEH8</accession>
<feature type="chain" id="PRO_0000368488" description="ATP synthase subunit b">
    <location>
        <begin position="1"/>
        <end position="156"/>
    </location>
</feature>
<feature type="transmembrane region" description="Helical" evidence="1">
    <location>
        <begin position="5"/>
        <end position="27"/>
    </location>
</feature>
<gene>
    <name evidence="1" type="primary">atpF</name>
    <name type="ordered locus">FTA_1906</name>
</gene>